<proteinExistence type="inferred from homology"/>
<comment type="function">
    <text evidence="1">Participates in chromosomal partition during cell division. May act via the formation of a condensin-like complex containing Smc and ScpB that pull DNA away from mid-cell into both cell halves.</text>
</comment>
<comment type="subunit">
    <text evidence="1">Component of a cohesin-like complex composed of ScpA, ScpB and the Smc homodimer, in which ScpA and ScpB bind to the head domain of Smc. The presence of the three proteins is required for the association of the complex with DNA.</text>
</comment>
<comment type="subcellular location">
    <subcellularLocation>
        <location evidence="1">Cytoplasm</location>
    </subcellularLocation>
    <text evidence="1">Associated with two foci at the outer edges of the nucleoid region in young cells, and at four foci within both cell halves in older cells.</text>
</comment>
<comment type="similarity">
    <text evidence="1">Belongs to the ScpA family.</text>
</comment>
<evidence type="ECO:0000255" key="1">
    <source>
        <dbReference type="HAMAP-Rule" id="MF_01805"/>
    </source>
</evidence>
<reference key="1">
    <citation type="journal article" date="2000" name="Nucleic Acids Res.">
        <title>Complete genome sequence of the alkaliphilic bacterium Bacillus halodurans and genomic sequence comparison with Bacillus subtilis.</title>
        <authorList>
            <person name="Takami H."/>
            <person name="Nakasone K."/>
            <person name="Takaki Y."/>
            <person name="Maeno G."/>
            <person name="Sasaki R."/>
            <person name="Masui N."/>
            <person name="Fuji F."/>
            <person name="Hirama C."/>
            <person name="Nakamura Y."/>
            <person name="Ogasawara N."/>
            <person name="Kuhara S."/>
            <person name="Horikoshi K."/>
        </authorList>
    </citation>
    <scope>NUCLEOTIDE SEQUENCE [LARGE SCALE GENOMIC DNA]</scope>
    <source>
        <strain>ATCC BAA-125 / DSM 18197 / FERM 7344 / JCM 9153 / C-125</strain>
    </source>
</reference>
<keyword id="KW-0131">Cell cycle</keyword>
<keyword id="KW-0132">Cell division</keyword>
<keyword id="KW-0159">Chromosome partition</keyword>
<keyword id="KW-0963">Cytoplasm</keyword>
<keyword id="KW-1185">Reference proteome</keyword>
<gene>
    <name evidence="1" type="primary">scpA</name>
    <name type="ordered locus">BH1560</name>
</gene>
<sequence length="260" mass="30897">MNPYSVKLDTFEGPLDLLLHLINQAEVDIYDIPVALITEQYMAYIHTMQELQLDVASEYLVMAATLLQIKSKMLLPKQEEIFDETFEYEEEDPREELMFRLIEYRRYKEAAQELKEKEGERSQVHTRLPDNLDDYLTEEERQRQSIQGVTLFDMLAAYQKLLKRRAYSRPRTSTVKVEEYSIDERMTDILMDLEKCNGKCRFQDLFVEKGRGHMVVTFLAMLELMKTDAIYCEQNENFADIWIYRREGKNRDIERASSSH</sequence>
<accession>Q9KCL1</accession>
<organism>
    <name type="scientific">Halalkalibacterium halodurans (strain ATCC BAA-125 / DSM 18197 / FERM 7344 / JCM 9153 / C-125)</name>
    <name type="common">Bacillus halodurans</name>
    <dbReference type="NCBI Taxonomy" id="272558"/>
    <lineage>
        <taxon>Bacteria</taxon>
        <taxon>Bacillati</taxon>
        <taxon>Bacillota</taxon>
        <taxon>Bacilli</taxon>
        <taxon>Bacillales</taxon>
        <taxon>Bacillaceae</taxon>
        <taxon>Halalkalibacterium (ex Joshi et al. 2022)</taxon>
    </lineage>
</organism>
<name>SCPA_HALH5</name>
<dbReference type="EMBL" id="BA000004">
    <property type="protein sequence ID" value="BAB05279.1"/>
    <property type="molecule type" value="Genomic_DNA"/>
</dbReference>
<dbReference type="PIR" id="H83844">
    <property type="entry name" value="H83844"/>
</dbReference>
<dbReference type="RefSeq" id="WP_010897723.1">
    <property type="nucleotide sequence ID" value="NC_002570.2"/>
</dbReference>
<dbReference type="SMR" id="Q9KCL1"/>
<dbReference type="STRING" id="272558.gene:10727458"/>
<dbReference type="KEGG" id="bha:BH1560"/>
<dbReference type="eggNOG" id="COG1354">
    <property type="taxonomic scope" value="Bacteria"/>
</dbReference>
<dbReference type="HOGENOM" id="CLU_038686_3_1_9"/>
<dbReference type="OrthoDB" id="9811016at2"/>
<dbReference type="Proteomes" id="UP000001258">
    <property type="component" value="Chromosome"/>
</dbReference>
<dbReference type="GO" id="GO:0005737">
    <property type="term" value="C:cytoplasm"/>
    <property type="evidence" value="ECO:0007669"/>
    <property type="project" value="UniProtKB-SubCell"/>
</dbReference>
<dbReference type="GO" id="GO:0051301">
    <property type="term" value="P:cell division"/>
    <property type="evidence" value="ECO:0007669"/>
    <property type="project" value="UniProtKB-KW"/>
</dbReference>
<dbReference type="GO" id="GO:0007059">
    <property type="term" value="P:chromosome segregation"/>
    <property type="evidence" value="ECO:0007669"/>
    <property type="project" value="UniProtKB-UniRule"/>
</dbReference>
<dbReference type="GO" id="GO:0006260">
    <property type="term" value="P:DNA replication"/>
    <property type="evidence" value="ECO:0007669"/>
    <property type="project" value="UniProtKB-UniRule"/>
</dbReference>
<dbReference type="Gene3D" id="6.10.250.2410">
    <property type="match status" value="1"/>
</dbReference>
<dbReference type="Gene3D" id="1.10.10.580">
    <property type="entry name" value="Structural maintenance of chromosome 1. Chain E"/>
    <property type="match status" value="1"/>
</dbReference>
<dbReference type="HAMAP" id="MF_01805">
    <property type="entry name" value="ScpA"/>
    <property type="match status" value="1"/>
</dbReference>
<dbReference type="InterPro" id="IPR003768">
    <property type="entry name" value="ScpA"/>
</dbReference>
<dbReference type="InterPro" id="IPR023093">
    <property type="entry name" value="ScpA-like_C"/>
</dbReference>
<dbReference type="NCBIfam" id="NF000995">
    <property type="entry name" value="PRK00104.1-4"/>
    <property type="match status" value="1"/>
</dbReference>
<dbReference type="PANTHER" id="PTHR33969">
    <property type="entry name" value="SEGREGATION AND CONDENSATION PROTEIN A"/>
    <property type="match status" value="1"/>
</dbReference>
<dbReference type="PANTHER" id="PTHR33969:SF2">
    <property type="entry name" value="SEGREGATION AND CONDENSATION PROTEIN A"/>
    <property type="match status" value="1"/>
</dbReference>
<dbReference type="Pfam" id="PF02616">
    <property type="entry name" value="SMC_ScpA"/>
    <property type="match status" value="1"/>
</dbReference>
<feature type="chain" id="PRO_0000211078" description="Segregation and condensation protein A">
    <location>
        <begin position="1"/>
        <end position="260"/>
    </location>
</feature>
<protein>
    <recommendedName>
        <fullName evidence="1">Segregation and condensation protein A</fullName>
    </recommendedName>
</protein>